<organism>
    <name type="scientific">Nitrosococcus oceani (strain ATCC 19707 / BCRC 17464 / JCM 30415 / NCIMB 11848 / C-107)</name>
    <dbReference type="NCBI Taxonomy" id="323261"/>
    <lineage>
        <taxon>Bacteria</taxon>
        <taxon>Pseudomonadati</taxon>
        <taxon>Pseudomonadota</taxon>
        <taxon>Gammaproteobacteria</taxon>
        <taxon>Chromatiales</taxon>
        <taxon>Chromatiaceae</taxon>
        <taxon>Nitrosococcus</taxon>
    </lineage>
</organism>
<dbReference type="EC" id="6.3.4.2" evidence="1"/>
<dbReference type="EMBL" id="CP000127">
    <property type="protein sequence ID" value="ABA57363.1"/>
    <property type="molecule type" value="Genomic_DNA"/>
</dbReference>
<dbReference type="RefSeq" id="WP_002810403.1">
    <property type="nucleotide sequence ID" value="NC_007484.1"/>
</dbReference>
<dbReference type="SMR" id="Q3JCT3"/>
<dbReference type="FunCoup" id="Q3JCT3">
    <property type="interactions" value="470"/>
</dbReference>
<dbReference type="STRING" id="323261.Noc_0850"/>
<dbReference type="MEROPS" id="C26.964"/>
<dbReference type="KEGG" id="noc:Noc_0850"/>
<dbReference type="eggNOG" id="COG0504">
    <property type="taxonomic scope" value="Bacteria"/>
</dbReference>
<dbReference type="HOGENOM" id="CLU_011675_5_0_6"/>
<dbReference type="InParanoid" id="Q3JCT3"/>
<dbReference type="UniPathway" id="UPA00159">
    <property type="reaction ID" value="UER00277"/>
</dbReference>
<dbReference type="Proteomes" id="UP000006838">
    <property type="component" value="Chromosome"/>
</dbReference>
<dbReference type="GO" id="GO:0005829">
    <property type="term" value="C:cytosol"/>
    <property type="evidence" value="ECO:0007669"/>
    <property type="project" value="TreeGrafter"/>
</dbReference>
<dbReference type="GO" id="GO:0005524">
    <property type="term" value="F:ATP binding"/>
    <property type="evidence" value="ECO:0007669"/>
    <property type="project" value="UniProtKB-KW"/>
</dbReference>
<dbReference type="GO" id="GO:0003883">
    <property type="term" value="F:CTP synthase activity"/>
    <property type="evidence" value="ECO:0007669"/>
    <property type="project" value="UniProtKB-UniRule"/>
</dbReference>
<dbReference type="GO" id="GO:0004359">
    <property type="term" value="F:glutaminase activity"/>
    <property type="evidence" value="ECO:0007669"/>
    <property type="project" value="RHEA"/>
</dbReference>
<dbReference type="GO" id="GO:0042802">
    <property type="term" value="F:identical protein binding"/>
    <property type="evidence" value="ECO:0007669"/>
    <property type="project" value="TreeGrafter"/>
</dbReference>
<dbReference type="GO" id="GO:0046872">
    <property type="term" value="F:metal ion binding"/>
    <property type="evidence" value="ECO:0007669"/>
    <property type="project" value="UniProtKB-KW"/>
</dbReference>
<dbReference type="GO" id="GO:0044210">
    <property type="term" value="P:'de novo' CTP biosynthetic process"/>
    <property type="evidence" value="ECO:0007669"/>
    <property type="project" value="UniProtKB-UniRule"/>
</dbReference>
<dbReference type="GO" id="GO:0019856">
    <property type="term" value="P:pyrimidine nucleobase biosynthetic process"/>
    <property type="evidence" value="ECO:0007669"/>
    <property type="project" value="TreeGrafter"/>
</dbReference>
<dbReference type="CDD" id="cd03113">
    <property type="entry name" value="CTPS_N"/>
    <property type="match status" value="1"/>
</dbReference>
<dbReference type="CDD" id="cd01746">
    <property type="entry name" value="GATase1_CTP_Synthase"/>
    <property type="match status" value="1"/>
</dbReference>
<dbReference type="FunFam" id="3.40.50.300:FF:000009">
    <property type="entry name" value="CTP synthase"/>
    <property type="match status" value="1"/>
</dbReference>
<dbReference type="FunFam" id="3.40.50.880:FF:000002">
    <property type="entry name" value="CTP synthase"/>
    <property type="match status" value="1"/>
</dbReference>
<dbReference type="Gene3D" id="3.40.50.880">
    <property type="match status" value="1"/>
</dbReference>
<dbReference type="Gene3D" id="3.40.50.300">
    <property type="entry name" value="P-loop containing nucleotide triphosphate hydrolases"/>
    <property type="match status" value="1"/>
</dbReference>
<dbReference type="HAMAP" id="MF_01227">
    <property type="entry name" value="PyrG"/>
    <property type="match status" value="1"/>
</dbReference>
<dbReference type="InterPro" id="IPR029062">
    <property type="entry name" value="Class_I_gatase-like"/>
</dbReference>
<dbReference type="InterPro" id="IPR004468">
    <property type="entry name" value="CTP_synthase"/>
</dbReference>
<dbReference type="InterPro" id="IPR017456">
    <property type="entry name" value="CTP_synthase_N"/>
</dbReference>
<dbReference type="InterPro" id="IPR017926">
    <property type="entry name" value="GATASE"/>
</dbReference>
<dbReference type="InterPro" id="IPR033828">
    <property type="entry name" value="GATase1_CTP_Synthase"/>
</dbReference>
<dbReference type="InterPro" id="IPR027417">
    <property type="entry name" value="P-loop_NTPase"/>
</dbReference>
<dbReference type="NCBIfam" id="NF003792">
    <property type="entry name" value="PRK05380.1"/>
    <property type="match status" value="1"/>
</dbReference>
<dbReference type="NCBIfam" id="TIGR00337">
    <property type="entry name" value="PyrG"/>
    <property type="match status" value="1"/>
</dbReference>
<dbReference type="PANTHER" id="PTHR11550">
    <property type="entry name" value="CTP SYNTHASE"/>
    <property type="match status" value="1"/>
</dbReference>
<dbReference type="PANTHER" id="PTHR11550:SF0">
    <property type="entry name" value="CTP SYNTHASE-RELATED"/>
    <property type="match status" value="1"/>
</dbReference>
<dbReference type="Pfam" id="PF06418">
    <property type="entry name" value="CTP_synth_N"/>
    <property type="match status" value="1"/>
</dbReference>
<dbReference type="Pfam" id="PF00117">
    <property type="entry name" value="GATase"/>
    <property type="match status" value="1"/>
</dbReference>
<dbReference type="SUPFAM" id="SSF52317">
    <property type="entry name" value="Class I glutamine amidotransferase-like"/>
    <property type="match status" value="1"/>
</dbReference>
<dbReference type="SUPFAM" id="SSF52540">
    <property type="entry name" value="P-loop containing nucleoside triphosphate hydrolases"/>
    <property type="match status" value="1"/>
</dbReference>
<dbReference type="PROSITE" id="PS51273">
    <property type="entry name" value="GATASE_TYPE_1"/>
    <property type="match status" value="1"/>
</dbReference>
<keyword id="KW-0067">ATP-binding</keyword>
<keyword id="KW-0315">Glutamine amidotransferase</keyword>
<keyword id="KW-0436">Ligase</keyword>
<keyword id="KW-0460">Magnesium</keyword>
<keyword id="KW-0479">Metal-binding</keyword>
<keyword id="KW-0547">Nucleotide-binding</keyword>
<keyword id="KW-0665">Pyrimidine biosynthesis</keyword>
<keyword id="KW-1185">Reference proteome</keyword>
<reference key="1">
    <citation type="journal article" date="2006" name="Appl. Environ. Microbiol.">
        <title>Complete genome sequence of the marine, chemolithoautotrophic, ammonia-oxidizing bacterium Nitrosococcus oceani ATCC 19707.</title>
        <authorList>
            <person name="Klotz M.G."/>
            <person name="Arp D.J."/>
            <person name="Chain P.S.G."/>
            <person name="El-Sheikh A.F."/>
            <person name="Hauser L.J."/>
            <person name="Hommes N.G."/>
            <person name="Larimer F.W."/>
            <person name="Malfatti S.A."/>
            <person name="Norton J.M."/>
            <person name="Poret-Peterson A.T."/>
            <person name="Vergez L.M."/>
            <person name="Ward B.B."/>
        </authorList>
    </citation>
    <scope>NUCLEOTIDE SEQUENCE [LARGE SCALE GENOMIC DNA]</scope>
    <source>
        <strain>ATCC 19707 / BCRC 17464 / JCM 30415 / NCIMB 11848 / C-107</strain>
    </source>
</reference>
<sequence>MTKFIFVTGGVVSSLGKGITSASLGALLEARGLAVTLVKLDPYINVDPGTMSPYQHGEVFVTGDGAETDLDLGHYERFVRMTMSRRNNYTTGRIYENVIAQERRGAYLGNTVQVIPHITDEIKRCICAGADNAQVVLVEIGGTVGDIESLPFLEAIRQMGVELGREQTLFMHLTLIPFIRSAGELKTKPTQHSVKELRSIGIQPDVLVCRLEHPLPESERRKIALFTSVPERAVISAVDVDSIYKIPLELYAQKLDEIVVEQLGLETGPANLTEWQRVIDGLEHPHDEVTITLVGKYVDHREAYKSLSEALIHGGIHTRTRVNITYLDSEEIEAQGIGGLESADAILIPGGFGERGVEGMIIAVQYARENGVPYLGICLGMQVAVIEFARHQAGMKEAHSTEFSEHTPDPVIALITEWRRADGSIERRDEQMGLGGTMRLGNYECELLPGSRAAALYGQERITERHRHRYEFNNDYRELLEGAGLVMAGTSFDGNLVEMVEISHHPWFVACQFHPEFTSTPRDGHPLFNSFIRAAAEHRRRVTLKSSRDS</sequence>
<name>PYRG_NITOC</name>
<proteinExistence type="inferred from homology"/>
<comment type="function">
    <text evidence="1">Catalyzes the ATP-dependent amination of UTP to CTP with either L-glutamine or ammonia as the source of nitrogen. Regulates intracellular CTP levels through interactions with the four ribonucleotide triphosphates.</text>
</comment>
<comment type="catalytic activity">
    <reaction evidence="1">
        <text>UTP + L-glutamine + ATP + H2O = CTP + L-glutamate + ADP + phosphate + 2 H(+)</text>
        <dbReference type="Rhea" id="RHEA:26426"/>
        <dbReference type="ChEBI" id="CHEBI:15377"/>
        <dbReference type="ChEBI" id="CHEBI:15378"/>
        <dbReference type="ChEBI" id="CHEBI:29985"/>
        <dbReference type="ChEBI" id="CHEBI:30616"/>
        <dbReference type="ChEBI" id="CHEBI:37563"/>
        <dbReference type="ChEBI" id="CHEBI:43474"/>
        <dbReference type="ChEBI" id="CHEBI:46398"/>
        <dbReference type="ChEBI" id="CHEBI:58359"/>
        <dbReference type="ChEBI" id="CHEBI:456216"/>
        <dbReference type="EC" id="6.3.4.2"/>
    </reaction>
</comment>
<comment type="catalytic activity">
    <reaction evidence="1">
        <text>L-glutamine + H2O = L-glutamate + NH4(+)</text>
        <dbReference type="Rhea" id="RHEA:15889"/>
        <dbReference type="ChEBI" id="CHEBI:15377"/>
        <dbReference type="ChEBI" id="CHEBI:28938"/>
        <dbReference type="ChEBI" id="CHEBI:29985"/>
        <dbReference type="ChEBI" id="CHEBI:58359"/>
    </reaction>
</comment>
<comment type="catalytic activity">
    <reaction evidence="1">
        <text>UTP + NH4(+) + ATP = CTP + ADP + phosphate + 2 H(+)</text>
        <dbReference type="Rhea" id="RHEA:16597"/>
        <dbReference type="ChEBI" id="CHEBI:15378"/>
        <dbReference type="ChEBI" id="CHEBI:28938"/>
        <dbReference type="ChEBI" id="CHEBI:30616"/>
        <dbReference type="ChEBI" id="CHEBI:37563"/>
        <dbReference type="ChEBI" id="CHEBI:43474"/>
        <dbReference type="ChEBI" id="CHEBI:46398"/>
        <dbReference type="ChEBI" id="CHEBI:456216"/>
    </reaction>
</comment>
<comment type="activity regulation">
    <text evidence="1">Allosterically activated by GTP, when glutamine is the substrate; GTP has no effect on the reaction when ammonia is the substrate. The allosteric effector GTP functions by stabilizing the protein conformation that binds the tetrahedral intermediate(s) formed during glutamine hydrolysis. Inhibited by the product CTP, via allosteric rather than competitive inhibition.</text>
</comment>
<comment type="pathway">
    <text evidence="1">Pyrimidine metabolism; CTP biosynthesis via de novo pathway; CTP from UDP: step 2/2.</text>
</comment>
<comment type="subunit">
    <text evidence="1">Homotetramer.</text>
</comment>
<comment type="miscellaneous">
    <text evidence="1">CTPSs have evolved a hybrid strategy for distinguishing between UTP and CTP. The overlapping regions of the product feedback inhibitory and substrate sites recognize a common feature in both compounds, the triphosphate moiety. To differentiate isosteric substrate and product pyrimidine rings, an additional pocket far from the expected kinase/ligase catalytic site, specifically recognizes the cytosine and ribose portions of the product inhibitor.</text>
</comment>
<comment type="similarity">
    <text evidence="1">Belongs to the CTP synthase family.</text>
</comment>
<evidence type="ECO:0000255" key="1">
    <source>
        <dbReference type="HAMAP-Rule" id="MF_01227"/>
    </source>
</evidence>
<accession>Q3JCT3</accession>
<feature type="chain" id="PRO_0000266164" description="CTP synthase">
    <location>
        <begin position="1"/>
        <end position="550"/>
    </location>
</feature>
<feature type="domain" description="Glutamine amidotransferase type-1" evidence="1">
    <location>
        <begin position="290"/>
        <end position="541"/>
    </location>
</feature>
<feature type="region of interest" description="Amidoligase domain" evidence="1">
    <location>
        <begin position="1"/>
        <end position="265"/>
    </location>
</feature>
<feature type="active site" description="Nucleophile; for glutamine hydrolysis" evidence="1">
    <location>
        <position position="378"/>
    </location>
</feature>
<feature type="active site" evidence="1">
    <location>
        <position position="514"/>
    </location>
</feature>
<feature type="active site" evidence="1">
    <location>
        <position position="516"/>
    </location>
</feature>
<feature type="binding site" evidence="1">
    <location>
        <position position="13"/>
    </location>
    <ligand>
        <name>CTP</name>
        <dbReference type="ChEBI" id="CHEBI:37563"/>
        <note>allosteric inhibitor</note>
    </ligand>
</feature>
<feature type="binding site" evidence="1">
    <location>
        <position position="13"/>
    </location>
    <ligand>
        <name>UTP</name>
        <dbReference type="ChEBI" id="CHEBI:46398"/>
    </ligand>
</feature>
<feature type="binding site" evidence="1">
    <location>
        <begin position="14"/>
        <end position="19"/>
    </location>
    <ligand>
        <name>ATP</name>
        <dbReference type="ChEBI" id="CHEBI:30616"/>
    </ligand>
</feature>
<feature type="binding site" evidence="1">
    <location>
        <position position="54"/>
    </location>
    <ligand>
        <name>L-glutamine</name>
        <dbReference type="ChEBI" id="CHEBI:58359"/>
    </ligand>
</feature>
<feature type="binding site" evidence="1">
    <location>
        <position position="71"/>
    </location>
    <ligand>
        <name>ATP</name>
        <dbReference type="ChEBI" id="CHEBI:30616"/>
    </ligand>
</feature>
<feature type="binding site" evidence="1">
    <location>
        <position position="71"/>
    </location>
    <ligand>
        <name>Mg(2+)</name>
        <dbReference type="ChEBI" id="CHEBI:18420"/>
    </ligand>
</feature>
<feature type="binding site" evidence="1">
    <location>
        <position position="139"/>
    </location>
    <ligand>
        <name>Mg(2+)</name>
        <dbReference type="ChEBI" id="CHEBI:18420"/>
    </ligand>
</feature>
<feature type="binding site" evidence="1">
    <location>
        <begin position="146"/>
        <end position="148"/>
    </location>
    <ligand>
        <name>CTP</name>
        <dbReference type="ChEBI" id="CHEBI:37563"/>
        <note>allosteric inhibitor</note>
    </ligand>
</feature>
<feature type="binding site" evidence="1">
    <location>
        <begin position="186"/>
        <end position="191"/>
    </location>
    <ligand>
        <name>CTP</name>
        <dbReference type="ChEBI" id="CHEBI:37563"/>
        <note>allosteric inhibitor</note>
    </ligand>
</feature>
<feature type="binding site" evidence="1">
    <location>
        <begin position="186"/>
        <end position="191"/>
    </location>
    <ligand>
        <name>UTP</name>
        <dbReference type="ChEBI" id="CHEBI:46398"/>
    </ligand>
</feature>
<feature type="binding site" evidence="1">
    <location>
        <position position="222"/>
    </location>
    <ligand>
        <name>CTP</name>
        <dbReference type="ChEBI" id="CHEBI:37563"/>
        <note>allosteric inhibitor</note>
    </ligand>
</feature>
<feature type="binding site" evidence="1">
    <location>
        <position position="222"/>
    </location>
    <ligand>
        <name>UTP</name>
        <dbReference type="ChEBI" id="CHEBI:46398"/>
    </ligand>
</feature>
<feature type="binding site" evidence="1">
    <location>
        <position position="351"/>
    </location>
    <ligand>
        <name>L-glutamine</name>
        <dbReference type="ChEBI" id="CHEBI:58359"/>
    </ligand>
</feature>
<feature type="binding site" evidence="1">
    <location>
        <begin position="379"/>
        <end position="382"/>
    </location>
    <ligand>
        <name>L-glutamine</name>
        <dbReference type="ChEBI" id="CHEBI:58359"/>
    </ligand>
</feature>
<feature type="binding site" evidence="1">
    <location>
        <position position="402"/>
    </location>
    <ligand>
        <name>L-glutamine</name>
        <dbReference type="ChEBI" id="CHEBI:58359"/>
    </ligand>
</feature>
<feature type="binding site" evidence="1">
    <location>
        <position position="469"/>
    </location>
    <ligand>
        <name>L-glutamine</name>
        <dbReference type="ChEBI" id="CHEBI:58359"/>
    </ligand>
</feature>
<gene>
    <name evidence="1" type="primary">pyrG</name>
    <name type="ordered locus">Noc_0850</name>
</gene>
<protein>
    <recommendedName>
        <fullName evidence="1">CTP synthase</fullName>
        <ecNumber evidence="1">6.3.4.2</ecNumber>
    </recommendedName>
    <alternativeName>
        <fullName evidence="1">Cytidine 5'-triphosphate synthase</fullName>
    </alternativeName>
    <alternativeName>
        <fullName evidence="1">Cytidine triphosphate synthetase</fullName>
        <shortName evidence="1">CTP synthetase</shortName>
        <shortName evidence="1">CTPS</shortName>
    </alternativeName>
    <alternativeName>
        <fullName evidence="1">UTP--ammonia ligase</fullName>
    </alternativeName>
</protein>